<gene>
    <name type="primary">efp2</name>
    <name type="ordered locus">pc1529</name>
</gene>
<protein>
    <recommendedName>
        <fullName>Elongation factor P 2</fullName>
        <shortName>EF-P 2</shortName>
    </recommendedName>
</protein>
<sequence>MAQMSTSEIRGGVKVEVEAQPYTIISNEFVKPGKGQAFNRIKMKHLLTGRVIERTFKSGEKLNLADVAEEEMRMLYKESDGVIFMDEKSFEQIKISLESIGETVQWLLDDHVYEVIFYNGNAVNVEPPTFMEMVITDTSPGVRGDTASGRVLKPAILESGAKVQVPIFVEQGEKIKVDTRTGEYVSRVSS</sequence>
<keyword id="KW-0963">Cytoplasm</keyword>
<keyword id="KW-0251">Elongation factor</keyword>
<keyword id="KW-0648">Protein biosynthesis</keyword>
<keyword id="KW-1185">Reference proteome</keyword>
<accession>Q6MAZ6</accession>
<proteinExistence type="inferred from homology"/>
<organism>
    <name type="scientific">Protochlamydia amoebophila (strain UWE25)</name>
    <dbReference type="NCBI Taxonomy" id="264201"/>
    <lineage>
        <taxon>Bacteria</taxon>
        <taxon>Pseudomonadati</taxon>
        <taxon>Chlamydiota</taxon>
        <taxon>Chlamydiia</taxon>
        <taxon>Parachlamydiales</taxon>
        <taxon>Parachlamydiaceae</taxon>
        <taxon>Candidatus Protochlamydia</taxon>
    </lineage>
</organism>
<reference key="1">
    <citation type="journal article" date="2004" name="Science">
        <title>Illuminating the evolutionary history of chlamydiae.</title>
        <authorList>
            <person name="Horn M."/>
            <person name="Collingro A."/>
            <person name="Schmitz-Esser S."/>
            <person name="Beier C.L."/>
            <person name="Purkhold U."/>
            <person name="Fartmann B."/>
            <person name="Brandt P."/>
            <person name="Nyakatura G.J."/>
            <person name="Droege M."/>
            <person name="Frishman D."/>
            <person name="Rattei T."/>
            <person name="Mewes H.-W."/>
            <person name="Wagner M."/>
        </authorList>
    </citation>
    <scope>NUCLEOTIDE SEQUENCE [LARGE SCALE GENOMIC DNA]</scope>
    <source>
        <strain>UWE25</strain>
    </source>
</reference>
<feature type="chain" id="PRO_0000094301" description="Elongation factor P 2">
    <location>
        <begin position="1"/>
        <end position="190"/>
    </location>
</feature>
<dbReference type="EMBL" id="BX908798">
    <property type="protein sequence ID" value="CAF24253.1"/>
    <property type="molecule type" value="Genomic_DNA"/>
</dbReference>
<dbReference type="RefSeq" id="WP_011176075.1">
    <property type="nucleotide sequence ID" value="NC_005861.2"/>
</dbReference>
<dbReference type="SMR" id="Q6MAZ6"/>
<dbReference type="STRING" id="264201.pc1529"/>
<dbReference type="KEGG" id="pcu:PC_RS07335"/>
<dbReference type="eggNOG" id="COG0231">
    <property type="taxonomic scope" value="Bacteria"/>
</dbReference>
<dbReference type="HOGENOM" id="CLU_074944_0_0_0"/>
<dbReference type="OrthoDB" id="9801844at2"/>
<dbReference type="UniPathway" id="UPA00345"/>
<dbReference type="Proteomes" id="UP000000529">
    <property type="component" value="Chromosome"/>
</dbReference>
<dbReference type="GO" id="GO:0005737">
    <property type="term" value="C:cytoplasm"/>
    <property type="evidence" value="ECO:0007669"/>
    <property type="project" value="UniProtKB-SubCell"/>
</dbReference>
<dbReference type="GO" id="GO:0003746">
    <property type="term" value="F:translation elongation factor activity"/>
    <property type="evidence" value="ECO:0007669"/>
    <property type="project" value="UniProtKB-UniRule"/>
</dbReference>
<dbReference type="GO" id="GO:0043043">
    <property type="term" value="P:peptide biosynthetic process"/>
    <property type="evidence" value="ECO:0007669"/>
    <property type="project" value="InterPro"/>
</dbReference>
<dbReference type="CDD" id="cd04470">
    <property type="entry name" value="S1_EF-P_repeat_1"/>
    <property type="match status" value="1"/>
</dbReference>
<dbReference type="CDD" id="cd05794">
    <property type="entry name" value="S1_EF-P_repeat_2"/>
    <property type="match status" value="1"/>
</dbReference>
<dbReference type="FunFam" id="2.30.30.30:FF:000003">
    <property type="entry name" value="Elongation factor P"/>
    <property type="match status" value="1"/>
</dbReference>
<dbReference type="FunFam" id="2.40.50.140:FF:000004">
    <property type="entry name" value="Elongation factor P"/>
    <property type="match status" value="1"/>
</dbReference>
<dbReference type="FunFam" id="2.40.50.140:FF:000009">
    <property type="entry name" value="Elongation factor P"/>
    <property type="match status" value="1"/>
</dbReference>
<dbReference type="Gene3D" id="2.30.30.30">
    <property type="match status" value="1"/>
</dbReference>
<dbReference type="Gene3D" id="2.40.50.140">
    <property type="entry name" value="Nucleic acid-binding proteins"/>
    <property type="match status" value="2"/>
</dbReference>
<dbReference type="HAMAP" id="MF_00141">
    <property type="entry name" value="EF_P"/>
    <property type="match status" value="1"/>
</dbReference>
<dbReference type="InterPro" id="IPR015365">
    <property type="entry name" value="Elong-fact-P_C"/>
</dbReference>
<dbReference type="InterPro" id="IPR012340">
    <property type="entry name" value="NA-bd_OB-fold"/>
</dbReference>
<dbReference type="InterPro" id="IPR014722">
    <property type="entry name" value="Rib_uL2_dom2"/>
</dbReference>
<dbReference type="InterPro" id="IPR020599">
    <property type="entry name" value="Transl_elong_fac_P/YeiP"/>
</dbReference>
<dbReference type="InterPro" id="IPR013185">
    <property type="entry name" value="Transl_elong_KOW-like"/>
</dbReference>
<dbReference type="InterPro" id="IPR001059">
    <property type="entry name" value="Transl_elong_P/YeiP_cen"/>
</dbReference>
<dbReference type="InterPro" id="IPR013852">
    <property type="entry name" value="Transl_elong_P/YeiP_CS"/>
</dbReference>
<dbReference type="InterPro" id="IPR011768">
    <property type="entry name" value="Transl_elongation_fac_P"/>
</dbReference>
<dbReference type="InterPro" id="IPR008991">
    <property type="entry name" value="Translation_prot_SH3-like_sf"/>
</dbReference>
<dbReference type="NCBIfam" id="TIGR00038">
    <property type="entry name" value="efp"/>
    <property type="match status" value="1"/>
</dbReference>
<dbReference type="NCBIfam" id="NF001810">
    <property type="entry name" value="PRK00529.1"/>
    <property type="match status" value="1"/>
</dbReference>
<dbReference type="PANTHER" id="PTHR30053">
    <property type="entry name" value="ELONGATION FACTOR P"/>
    <property type="match status" value="1"/>
</dbReference>
<dbReference type="PANTHER" id="PTHR30053:SF12">
    <property type="entry name" value="ELONGATION FACTOR P (EF-P) FAMILY PROTEIN"/>
    <property type="match status" value="1"/>
</dbReference>
<dbReference type="Pfam" id="PF01132">
    <property type="entry name" value="EFP"/>
    <property type="match status" value="1"/>
</dbReference>
<dbReference type="Pfam" id="PF08207">
    <property type="entry name" value="EFP_N"/>
    <property type="match status" value="1"/>
</dbReference>
<dbReference type="Pfam" id="PF09285">
    <property type="entry name" value="Elong-fact-P_C"/>
    <property type="match status" value="1"/>
</dbReference>
<dbReference type="PIRSF" id="PIRSF005901">
    <property type="entry name" value="EF-P"/>
    <property type="match status" value="1"/>
</dbReference>
<dbReference type="SMART" id="SM01185">
    <property type="entry name" value="EFP"/>
    <property type="match status" value="1"/>
</dbReference>
<dbReference type="SMART" id="SM00841">
    <property type="entry name" value="Elong-fact-P_C"/>
    <property type="match status" value="1"/>
</dbReference>
<dbReference type="SUPFAM" id="SSF50249">
    <property type="entry name" value="Nucleic acid-binding proteins"/>
    <property type="match status" value="2"/>
</dbReference>
<dbReference type="SUPFAM" id="SSF50104">
    <property type="entry name" value="Translation proteins SH3-like domain"/>
    <property type="match status" value="1"/>
</dbReference>
<dbReference type="PROSITE" id="PS01275">
    <property type="entry name" value="EFP"/>
    <property type="match status" value="1"/>
</dbReference>
<name>EFP2_PARUW</name>
<comment type="function">
    <text evidence="1">Involved in peptide bond synthesis. Stimulates efficient translation and peptide-bond synthesis on native or reconstituted 70S ribosomes in vitro. Probably functions indirectly by altering the affinity of the ribosome for aminoacyl-tRNA, thus increasing their reactivity as acceptors for peptidyl transferase (By similarity).</text>
</comment>
<comment type="pathway">
    <text>Protein biosynthesis; polypeptide chain elongation.</text>
</comment>
<comment type="subcellular location">
    <subcellularLocation>
        <location evidence="1">Cytoplasm</location>
    </subcellularLocation>
</comment>
<comment type="similarity">
    <text evidence="2">Belongs to the elongation factor P family.</text>
</comment>
<evidence type="ECO:0000250" key="1"/>
<evidence type="ECO:0000305" key="2"/>